<accession>Q0I1P8</accession>
<gene>
    <name evidence="1" type="primary">rplU</name>
    <name type="ordered locus">HS_0245</name>
</gene>
<name>RL21_HISS1</name>
<keyword id="KW-0687">Ribonucleoprotein</keyword>
<keyword id="KW-0689">Ribosomal protein</keyword>
<keyword id="KW-0694">RNA-binding</keyword>
<keyword id="KW-0699">rRNA-binding</keyword>
<evidence type="ECO:0000255" key="1">
    <source>
        <dbReference type="HAMAP-Rule" id="MF_01363"/>
    </source>
</evidence>
<evidence type="ECO:0000305" key="2"/>
<organism>
    <name type="scientific">Histophilus somni (strain 129Pt)</name>
    <name type="common">Haemophilus somnus</name>
    <dbReference type="NCBI Taxonomy" id="205914"/>
    <lineage>
        <taxon>Bacteria</taxon>
        <taxon>Pseudomonadati</taxon>
        <taxon>Pseudomonadota</taxon>
        <taxon>Gammaproteobacteria</taxon>
        <taxon>Pasteurellales</taxon>
        <taxon>Pasteurellaceae</taxon>
        <taxon>Histophilus</taxon>
    </lineage>
</organism>
<dbReference type="EMBL" id="CP000436">
    <property type="protein sequence ID" value="ABI24523.1"/>
    <property type="molecule type" value="Genomic_DNA"/>
</dbReference>
<dbReference type="SMR" id="Q0I1P8"/>
<dbReference type="KEGG" id="hso:HS_0245"/>
<dbReference type="eggNOG" id="COG0261">
    <property type="taxonomic scope" value="Bacteria"/>
</dbReference>
<dbReference type="HOGENOM" id="CLU_061463_3_2_6"/>
<dbReference type="GO" id="GO:0005737">
    <property type="term" value="C:cytoplasm"/>
    <property type="evidence" value="ECO:0007669"/>
    <property type="project" value="UniProtKB-ARBA"/>
</dbReference>
<dbReference type="GO" id="GO:1990904">
    <property type="term" value="C:ribonucleoprotein complex"/>
    <property type="evidence" value="ECO:0007669"/>
    <property type="project" value="UniProtKB-KW"/>
</dbReference>
<dbReference type="GO" id="GO:0005840">
    <property type="term" value="C:ribosome"/>
    <property type="evidence" value="ECO:0007669"/>
    <property type="project" value="UniProtKB-KW"/>
</dbReference>
<dbReference type="GO" id="GO:0019843">
    <property type="term" value="F:rRNA binding"/>
    <property type="evidence" value="ECO:0007669"/>
    <property type="project" value="UniProtKB-UniRule"/>
</dbReference>
<dbReference type="GO" id="GO:0003735">
    <property type="term" value="F:structural constituent of ribosome"/>
    <property type="evidence" value="ECO:0007669"/>
    <property type="project" value="InterPro"/>
</dbReference>
<dbReference type="GO" id="GO:0006412">
    <property type="term" value="P:translation"/>
    <property type="evidence" value="ECO:0007669"/>
    <property type="project" value="UniProtKB-UniRule"/>
</dbReference>
<dbReference type="HAMAP" id="MF_01363">
    <property type="entry name" value="Ribosomal_bL21"/>
    <property type="match status" value="1"/>
</dbReference>
<dbReference type="InterPro" id="IPR028909">
    <property type="entry name" value="bL21-like"/>
</dbReference>
<dbReference type="InterPro" id="IPR036164">
    <property type="entry name" value="bL21-like_sf"/>
</dbReference>
<dbReference type="InterPro" id="IPR001787">
    <property type="entry name" value="Ribosomal_bL21"/>
</dbReference>
<dbReference type="InterPro" id="IPR018258">
    <property type="entry name" value="Ribosomal_bL21_CS"/>
</dbReference>
<dbReference type="NCBIfam" id="TIGR00061">
    <property type="entry name" value="L21"/>
    <property type="match status" value="1"/>
</dbReference>
<dbReference type="PANTHER" id="PTHR21349">
    <property type="entry name" value="50S RIBOSOMAL PROTEIN L21"/>
    <property type="match status" value="1"/>
</dbReference>
<dbReference type="PANTHER" id="PTHR21349:SF0">
    <property type="entry name" value="LARGE RIBOSOMAL SUBUNIT PROTEIN BL21M"/>
    <property type="match status" value="1"/>
</dbReference>
<dbReference type="Pfam" id="PF00829">
    <property type="entry name" value="Ribosomal_L21p"/>
    <property type="match status" value="1"/>
</dbReference>
<dbReference type="SUPFAM" id="SSF141091">
    <property type="entry name" value="L21p-like"/>
    <property type="match status" value="1"/>
</dbReference>
<dbReference type="PROSITE" id="PS01169">
    <property type="entry name" value="RIBOSOMAL_L21"/>
    <property type="match status" value="1"/>
</dbReference>
<proteinExistence type="inferred from homology"/>
<comment type="function">
    <text evidence="1">This protein binds to 23S rRNA in the presence of protein L20.</text>
</comment>
<comment type="subunit">
    <text evidence="1">Part of the 50S ribosomal subunit. Contacts protein L20.</text>
</comment>
<comment type="similarity">
    <text evidence="1">Belongs to the bacterial ribosomal protein bL21 family.</text>
</comment>
<protein>
    <recommendedName>
        <fullName evidence="1">Large ribosomal subunit protein bL21</fullName>
    </recommendedName>
    <alternativeName>
        <fullName evidence="2">50S ribosomal protein L21</fullName>
    </alternativeName>
</protein>
<reference key="1">
    <citation type="journal article" date="2007" name="J. Bacteriol.">
        <title>Complete genome sequence of Haemophilus somnus (Histophilus somni) strain 129Pt and comparison to Haemophilus ducreyi 35000HP and Haemophilus influenzae Rd.</title>
        <authorList>
            <person name="Challacombe J.F."/>
            <person name="Duncan A.J."/>
            <person name="Brettin T.S."/>
            <person name="Bruce D."/>
            <person name="Chertkov O."/>
            <person name="Detter J.C."/>
            <person name="Han C.S."/>
            <person name="Misra M."/>
            <person name="Richardson P."/>
            <person name="Tapia R."/>
            <person name="Thayer N."/>
            <person name="Xie G."/>
            <person name="Inzana T.J."/>
        </authorList>
    </citation>
    <scope>NUCLEOTIDE SEQUENCE [LARGE SCALE GENOMIC DNA]</scope>
    <source>
        <strain>129Pt</strain>
    </source>
</reference>
<sequence length="103" mass="11499">MYAVFQSGGKQHRVSEGHVVRLEKLELATGSTVEFDSVLMIVNGEDIKIGTPVVTGAKVVAEVVSQGRGEKVKIVKFRRRKHSRKQQGHRQWFTEVKITGIQA</sequence>
<feature type="chain" id="PRO_0000269325" description="Large ribosomal subunit protein bL21">
    <location>
        <begin position="1"/>
        <end position="103"/>
    </location>
</feature>